<dbReference type="EMBL" id="AE006469">
    <property type="protein sequence ID" value="AAK65096.1"/>
    <property type="molecule type" value="Genomic_DNA"/>
</dbReference>
<dbReference type="PIR" id="F95316">
    <property type="entry name" value="F95316"/>
</dbReference>
<dbReference type="RefSeq" id="NP_435684.1">
    <property type="nucleotide sequence ID" value="NC_003037.1"/>
</dbReference>
<dbReference type="RefSeq" id="WP_010967427.1">
    <property type="nucleotide sequence ID" value="NC_003037.1"/>
</dbReference>
<dbReference type="EnsemblBacteria" id="AAK65096">
    <property type="protein sequence ID" value="AAK65096"/>
    <property type="gene ID" value="SMa0806"/>
</dbReference>
<dbReference type="KEGG" id="sme:SMa0806"/>
<dbReference type="HOGENOM" id="CLU_106261_2_0_5"/>
<dbReference type="OrthoDB" id="8453701at2"/>
<dbReference type="Proteomes" id="UP000001976">
    <property type="component" value="Plasmid pSymA"/>
</dbReference>
<dbReference type="GO" id="GO:0003677">
    <property type="term" value="F:DNA binding"/>
    <property type="evidence" value="ECO:0007669"/>
    <property type="project" value="InterPro"/>
</dbReference>
<dbReference type="GO" id="GO:0004803">
    <property type="term" value="F:transposase activity"/>
    <property type="evidence" value="ECO:0007669"/>
    <property type="project" value="InterPro"/>
</dbReference>
<dbReference type="GO" id="GO:0006313">
    <property type="term" value="P:DNA transposition"/>
    <property type="evidence" value="ECO:0007669"/>
    <property type="project" value="InterPro"/>
</dbReference>
<dbReference type="InterPro" id="IPR009057">
    <property type="entry name" value="Homeodomain-like_sf"/>
</dbReference>
<dbReference type="InterPro" id="IPR002514">
    <property type="entry name" value="Transposase_8"/>
</dbReference>
<dbReference type="Pfam" id="PF01527">
    <property type="entry name" value="HTH_Tnp_1"/>
    <property type="match status" value="1"/>
</dbReference>
<dbReference type="SUPFAM" id="SSF46689">
    <property type="entry name" value="Homeodomain-like"/>
    <property type="match status" value="1"/>
</dbReference>
<name>SYRB3_RHIME</name>
<sequence length="151" mass="16795">MVDESNAGPVAPAVVADAEVKAPTGKKRSSSRPQKAPPEPAQPKMPAAKRRGYSEQERSEKLRLIETKVSEGNTLKDAIKSAGISEQTYYHWKGAAKSAAREDIERTRPLSAGDEFAELVQLEEENQRLRKQLAEKLRTENTELRKRLGLD</sequence>
<feature type="chain" id="PRO_0000072394" description="Probable transcriptional regulator syrB3">
    <location>
        <begin position="1"/>
        <end position="151"/>
    </location>
</feature>
<feature type="region of interest" description="Disordered" evidence="1">
    <location>
        <begin position="1"/>
        <end position="65"/>
    </location>
</feature>
<feature type="compositionally biased region" description="Low complexity" evidence="1">
    <location>
        <begin position="7"/>
        <end position="23"/>
    </location>
</feature>
<feature type="compositionally biased region" description="Basic and acidic residues" evidence="1">
    <location>
        <begin position="52"/>
        <end position="65"/>
    </location>
</feature>
<accession>P58346</accession>
<geneLocation type="plasmid">
    <name>pSymA</name>
    <name>megaplasmid 1</name>
</geneLocation>
<protein>
    <recommendedName>
        <fullName>Probable transcriptional regulator syrB3</fullName>
    </recommendedName>
</protein>
<proteinExistence type="inferred from homology"/>
<organism>
    <name type="scientific">Rhizobium meliloti (strain 1021)</name>
    <name type="common">Ensifer meliloti</name>
    <name type="synonym">Sinorhizobium meliloti</name>
    <dbReference type="NCBI Taxonomy" id="266834"/>
    <lineage>
        <taxon>Bacteria</taxon>
        <taxon>Pseudomonadati</taxon>
        <taxon>Pseudomonadota</taxon>
        <taxon>Alphaproteobacteria</taxon>
        <taxon>Hyphomicrobiales</taxon>
        <taxon>Rhizobiaceae</taxon>
        <taxon>Sinorhizobium/Ensifer group</taxon>
        <taxon>Sinorhizobium</taxon>
    </lineage>
</organism>
<gene>
    <name type="primary">syrB3</name>
    <name type="ordered locus">RA0438</name>
    <name type="ORF">SMa0806</name>
</gene>
<keyword id="KW-0536">Nodulation</keyword>
<keyword id="KW-0614">Plasmid</keyword>
<keyword id="KW-1185">Reference proteome</keyword>
<keyword id="KW-0678">Repressor</keyword>
<keyword id="KW-0804">Transcription</keyword>
<keyword id="KW-0805">Transcription regulation</keyword>
<evidence type="ECO:0000256" key="1">
    <source>
        <dbReference type="SAM" id="MobiDB-lite"/>
    </source>
</evidence>
<evidence type="ECO:0000305" key="2"/>
<reference key="1">
    <citation type="journal article" date="2001" name="Proc. Natl. Acad. Sci. U.S.A.">
        <title>Nucleotide sequence and predicted functions of the entire Sinorhizobium meliloti pSymA megaplasmid.</title>
        <authorList>
            <person name="Barnett M.J."/>
            <person name="Fisher R.F."/>
            <person name="Jones T."/>
            <person name="Komp C."/>
            <person name="Abola A.P."/>
            <person name="Barloy-Hubler F."/>
            <person name="Bowser L."/>
            <person name="Capela D."/>
            <person name="Galibert F."/>
            <person name="Gouzy J."/>
            <person name="Gurjal M."/>
            <person name="Hong A."/>
            <person name="Huizar L."/>
            <person name="Hyman R.W."/>
            <person name="Kahn D."/>
            <person name="Kahn M.L."/>
            <person name="Kalman S."/>
            <person name="Keating D.H."/>
            <person name="Palm C."/>
            <person name="Peck M.C."/>
            <person name="Surzycki R."/>
            <person name="Wells D.H."/>
            <person name="Yeh K.-C."/>
            <person name="Davis R.W."/>
            <person name="Federspiel N.A."/>
            <person name="Long S.R."/>
        </authorList>
    </citation>
    <scope>NUCLEOTIDE SEQUENCE [LARGE SCALE GENOMIC DNA]</scope>
    <source>
        <strain>1021</strain>
    </source>
</reference>
<reference key="2">
    <citation type="journal article" date="2001" name="Science">
        <title>The composite genome of the legume symbiont Sinorhizobium meliloti.</title>
        <authorList>
            <person name="Galibert F."/>
            <person name="Finan T.M."/>
            <person name="Long S.R."/>
            <person name="Puehler A."/>
            <person name="Abola P."/>
            <person name="Ampe F."/>
            <person name="Barloy-Hubler F."/>
            <person name="Barnett M.J."/>
            <person name="Becker A."/>
            <person name="Boistard P."/>
            <person name="Bothe G."/>
            <person name="Boutry M."/>
            <person name="Bowser L."/>
            <person name="Buhrmester J."/>
            <person name="Cadieu E."/>
            <person name="Capela D."/>
            <person name="Chain P."/>
            <person name="Cowie A."/>
            <person name="Davis R.W."/>
            <person name="Dreano S."/>
            <person name="Federspiel N.A."/>
            <person name="Fisher R.F."/>
            <person name="Gloux S."/>
            <person name="Godrie T."/>
            <person name="Goffeau A."/>
            <person name="Golding B."/>
            <person name="Gouzy J."/>
            <person name="Gurjal M."/>
            <person name="Hernandez-Lucas I."/>
            <person name="Hong A."/>
            <person name="Huizar L."/>
            <person name="Hyman R.W."/>
            <person name="Jones T."/>
            <person name="Kahn D."/>
            <person name="Kahn M.L."/>
            <person name="Kalman S."/>
            <person name="Keating D.H."/>
            <person name="Kiss E."/>
            <person name="Komp C."/>
            <person name="Lelaure V."/>
            <person name="Masuy D."/>
            <person name="Palm C."/>
            <person name="Peck M.C."/>
            <person name="Pohl T.M."/>
            <person name="Portetelle D."/>
            <person name="Purnelle B."/>
            <person name="Ramsperger U."/>
            <person name="Surzycki R."/>
            <person name="Thebault P."/>
            <person name="Vandenbol M."/>
            <person name="Vorhoelter F.J."/>
            <person name="Weidner S."/>
            <person name="Wells D.H."/>
            <person name="Wong K."/>
            <person name="Yeh K.-C."/>
            <person name="Batut J."/>
        </authorList>
    </citation>
    <scope>NUCLEOTIDE SEQUENCE [LARGE SCALE GENOMIC DNA]</scope>
    <source>
        <strain>1021</strain>
    </source>
</reference>
<comment type="similarity">
    <text evidence="2">Belongs to the SyrB family.</text>
</comment>